<organism>
    <name type="scientific">Wheat dwarf virus (isolate Sweden)</name>
    <name type="common">WDV</name>
    <dbReference type="NCBI Taxonomy" id="268789"/>
    <lineage>
        <taxon>Viruses</taxon>
        <taxon>Monodnaviria</taxon>
        <taxon>Shotokuvirae</taxon>
        <taxon>Cressdnaviricota</taxon>
        <taxon>Repensiviricetes</taxon>
        <taxon>Geplafuvirales</taxon>
        <taxon>Geminiviridae</taxon>
        <taxon>Mastrevirus</taxon>
        <taxon>Wheat dwarf virus</taxon>
    </lineage>
</organism>
<organismHost>
    <name type="scientific">Avena sativa</name>
    <name type="common">Oat</name>
    <dbReference type="NCBI Taxonomy" id="4498"/>
</organismHost>
<organismHost>
    <name type="scientific">Hordeum vulgare</name>
    <name type="common">Barley</name>
    <dbReference type="NCBI Taxonomy" id="4513"/>
</organismHost>
<organismHost>
    <name type="scientific">Lolium multiflorum</name>
    <name type="common">Italian ryegrass</name>
    <name type="synonym">Lolium perenne subsp. multiflorum</name>
    <dbReference type="NCBI Taxonomy" id="4521"/>
</organismHost>
<organismHost>
    <name type="scientific">Secale cereale</name>
    <name type="common">Rye</name>
    <dbReference type="NCBI Taxonomy" id="4550"/>
</organismHost>
<organismHost>
    <name type="scientific">Triticum aestivum</name>
    <name type="common">Wheat</name>
    <dbReference type="NCBI Taxonomy" id="4565"/>
</organismHost>
<keyword id="KW-1043">Host membrane</keyword>
<keyword id="KW-0472">Membrane</keyword>
<keyword id="KW-1185">Reference proteome</keyword>
<keyword id="KW-0812">Transmembrane</keyword>
<keyword id="KW-1133">Transmembrane helix</keyword>
<keyword id="KW-0813">Transport</keyword>
<keyword id="KW-0916">Viral movement protein</keyword>
<accession>P06849</accession>
<reference key="1">
    <citation type="journal article" date="1985" name="EMBO J.">
        <title>The nucleotide sequence of cloned wheat dwarf virus DNA.</title>
        <authorList>
            <person name="McDowell S.W."/>
            <person name="McDonald H."/>
            <person name="Hamilton W.D.O."/>
            <person name="Coutts R.H.A."/>
            <person name="Buck K.W."/>
        </authorList>
    </citation>
    <scope>NUCLEOTIDE SEQUENCE [GENOMIC DNA]</scope>
</reference>
<proteinExistence type="inferred from homology"/>
<protein>
    <recommendedName>
        <fullName>Movement protein</fullName>
        <shortName>MP</shortName>
    </recommendedName>
</protein>
<comment type="function">
    <text>Involved in the viral transport within, and between cells.</text>
</comment>
<comment type="subunit">
    <text evidence="1">Interacts with the capsid protein (CP). Part of a MP-CP-viral DNA complex (By similarity).</text>
</comment>
<comment type="subcellular location">
    <subcellularLocation>
        <location evidence="3">Host membrane</location>
        <topology evidence="3">Single-pass membrane protein</topology>
    </subcellularLocation>
</comment>
<comment type="similarity">
    <text evidence="3">Belongs to the mastrevirus movement protein family.</text>
</comment>
<evidence type="ECO:0000250" key="1"/>
<evidence type="ECO:0000255" key="2"/>
<evidence type="ECO:0000305" key="3"/>
<feature type="chain" id="PRO_0000222299" description="Movement protein">
    <location>
        <begin position="1"/>
        <end position="90"/>
    </location>
</feature>
<feature type="transmembrane region" description="Helical" evidence="2">
    <location>
        <begin position="32"/>
        <end position="52"/>
    </location>
</feature>
<sequence>MEQAIAPPLPIRDYQYQTPSIPGSSDYAWRTFVFVTFGLLIAVGVAWLAYTLFLKDLILVCKAKKQRRTEEIGYGNTPARLNGDQQGLPR</sequence>
<dbReference type="EMBL" id="X02869">
    <property type="protein sequence ID" value="CAA26621.1"/>
    <property type="molecule type" value="Genomic_DNA"/>
</dbReference>
<dbReference type="PIR" id="D24356">
    <property type="entry name" value="D24356"/>
</dbReference>
<dbReference type="SMR" id="P06849"/>
<dbReference type="Proteomes" id="UP000007629">
    <property type="component" value="Genome"/>
</dbReference>
<dbReference type="GO" id="GO:0033644">
    <property type="term" value="C:host cell membrane"/>
    <property type="evidence" value="ECO:0007669"/>
    <property type="project" value="UniProtKB-SubCell"/>
</dbReference>
<dbReference type="GO" id="GO:0016020">
    <property type="term" value="C:membrane"/>
    <property type="evidence" value="ECO:0007669"/>
    <property type="project" value="UniProtKB-KW"/>
</dbReference>
<dbReference type="GO" id="GO:0046740">
    <property type="term" value="P:transport of virus in host, cell to cell"/>
    <property type="evidence" value="ECO:0007669"/>
    <property type="project" value="UniProtKB-KW"/>
</dbReference>
<dbReference type="InterPro" id="IPR002621">
    <property type="entry name" value="Gemini_mov"/>
</dbReference>
<dbReference type="Pfam" id="PF01708">
    <property type="entry name" value="Gemini_mov"/>
    <property type="match status" value="1"/>
</dbReference>
<name>MP_WDVS</name>
<gene>
    <name type="ORF">V2</name>
</gene>